<reference key="1">
    <citation type="online journal article" date="1996" name="Plant Gene Register">
        <title>A barley photosystem II associated 10 kD protein shows that at least two forms are present in monocot plants.</title>
        <authorList>
            <person name="Nielsen P.S."/>
            <person name="Rasmussen S.K."/>
        </authorList>
        <locator>PGR96-108</locator>
    </citation>
    <scope>NUCLEOTIDE SEQUENCE [GENOMIC DNA]</scope>
    <source>
        <strain>cv. CI-16137</strain>
    </source>
</reference>
<comment type="function">
    <text>Associated with the oxygen-evolving complex of photosystem II.</text>
</comment>
<comment type="subcellular location">
    <subcellularLocation>
        <location>Plastid</location>
        <location>Chloroplast thylakoid membrane</location>
    </subcellularLocation>
    <text>Associated with the photosystem II complex.</text>
</comment>
<comment type="similarity">
    <text evidence="2">Belongs to the psbR family.</text>
</comment>
<accession>Q40070</accession>
<proteinExistence type="inferred from homology"/>
<gene>
    <name type="primary">PSBR</name>
</gene>
<name>PSBR_HORVU</name>
<feature type="transit peptide" description="Chloroplast" evidence="1">
    <location>
        <begin position="1"/>
        <end position="39"/>
    </location>
</feature>
<feature type="chain" id="PRO_0000029362" description="Photosystem II 10 kDa polypeptide, chloroplastic">
    <location>
        <begin position="40"/>
        <end position="138"/>
    </location>
</feature>
<dbReference type="EMBL" id="X97771">
    <property type="protein sequence ID" value="CAA66373.1"/>
    <property type="molecule type" value="Genomic_DNA"/>
</dbReference>
<dbReference type="PIR" id="T06173">
    <property type="entry name" value="T06173"/>
</dbReference>
<dbReference type="SMR" id="Q40070"/>
<dbReference type="OMA" id="IYARDEW"/>
<dbReference type="ExpressionAtlas" id="Q40070">
    <property type="expression patterns" value="baseline and differential"/>
</dbReference>
<dbReference type="GO" id="GO:0009535">
    <property type="term" value="C:chloroplast thylakoid membrane"/>
    <property type="evidence" value="ECO:0007669"/>
    <property type="project" value="UniProtKB-SubCell"/>
</dbReference>
<dbReference type="GO" id="GO:0009654">
    <property type="term" value="C:photosystem II oxygen evolving complex"/>
    <property type="evidence" value="ECO:0007669"/>
    <property type="project" value="InterPro"/>
</dbReference>
<dbReference type="GO" id="GO:0015979">
    <property type="term" value="P:photosynthesis"/>
    <property type="evidence" value="ECO:0007669"/>
    <property type="project" value="UniProtKB-KW"/>
</dbReference>
<dbReference type="InterPro" id="IPR006814">
    <property type="entry name" value="PSII_PsbR"/>
</dbReference>
<dbReference type="PANTHER" id="PTHR34369">
    <property type="entry name" value="PHOTOSYSTEM II 10 KDA POLYPEPTIDE, CHLOROPLASTIC"/>
    <property type="match status" value="1"/>
</dbReference>
<dbReference type="PANTHER" id="PTHR34369:SF6">
    <property type="entry name" value="PHOTOSYSTEM II 10 KDA POLYPEPTIDE, CHLOROPLASTIC"/>
    <property type="match status" value="1"/>
</dbReference>
<dbReference type="Pfam" id="PF04725">
    <property type="entry name" value="PsbR"/>
    <property type="match status" value="1"/>
</dbReference>
<evidence type="ECO:0000250" key="1"/>
<evidence type="ECO:0000305" key="2"/>
<keyword id="KW-0150">Chloroplast</keyword>
<keyword id="KW-0472">Membrane</keyword>
<keyword id="KW-0602">Photosynthesis</keyword>
<keyword id="KW-0604">Photosystem II</keyword>
<keyword id="KW-0934">Plastid</keyword>
<keyword id="KW-0793">Thylakoid</keyword>
<keyword id="KW-0809">Transit peptide</keyword>
<organism>
    <name type="scientific">Hordeum vulgare</name>
    <name type="common">Barley</name>
    <dbReference type="NCBI Taxonomy" id="4513"/>
    <lineage>
        <taxon>Eukaryota</taxon>
        <taxon>Viridiplantae</taxon>
        <taxon>Streptophyta</taxon>
        <taxon>Embryophyta</taxon>
        <taxon>Tracheophyta</taxon>
        <taxon>Spermatophyta</taxon>
        <taxon>Magnoliopsida</taxon>
        <taxon>Liliopsida</taxon>
        <taxon>Poales</taxon>
        <taxon>Poaceae</taxon>
        <taxon>BOP clade</taxon>
        <taxon>Pooideae</taxon>
        <taxon>Triticodae</taxon>
        <taxon>Triticeae</taxon>
        <taxon>Hordeinae</taxon>
        <taxon>Hordeum</taxon>
    </lineage>
</organism>
<sequence>MSACVMASLALKPSSSPLLQRSKLGGVRPSARPSLVIVAKKAKKVQTAQPYGPGGGVAFKEGVDASGRVAKGKGVYQFADKYGANVDGYSPIYTPEEWSPSGDVYVGGKTGLFLWAVTLAGILLGGALLVYSTSALAS</sequence>
<protein>
    <recommendedName>
        <fullName>Photosystem II 10 kDa polypeptide, chloroplastic</fullName>
    </recommendedName>
</protein>